<keyword id="KW-0066">ATP synthesis</keyword>
<keyword id="KW-1003">Cell membrane</keyword>
<keyword id="KW-0139">CF(1)</keyword>
<keyword id="KW-0375">Hydrogen ion transport</keyword>
<keyword id="KW-0406">Ion transport</keyword>
<keyword id="KW-0472">Membrane</keyword>
<keyword id="KW-0813">Transport</keyword>
<sequence length="290" mass="32651">MKSLKELSLRIKNIKSVQKITKIMQMVSAAKLLQSQKKLSNSKLHISKLHSIISSLALSADQELLARILNINNEDSFLVFIIASDRGLCGSFNSSVVKFSQEHINKLIANDKKVDIVFFGKKAFETGKNRFNSKNILKVENSKGITLKRVEALVSDIDLSKYNKVKVFYSKFYNTFMQKPILETIKPWSKDSLLIDNSVVSPLTDYSYEYEPQNIEFILKSLTQDYVTASLYSALLESAASENSARMVAMESANRNTKEMLNKLALLYNRSRQAAITTDLIEVIGGAESL</sequence>
<proteinExistence type="inferred from homology"/>
<evidence type="ECO:0000255" key="1">
    <source>
        <dbReference type="HAMAP-Rule" id="MF_00815"/>
    </source>
</evidence>
<reference key="1">
    <citation type="journal article" date="2008" name="Mol. Biol. Evol.">
        <title>Genome evolution of Wolbachia strain wPip from the Culex pipiens group.</title>
        <authorList>
            <person name="Klasson L."/>
            <person name="Walker T."/>
            <person name="Sebaihia M."/>
            <person name="Sanders M.J."/>
            <person name="Quail M.A."/>
            <person name="Lord A."/>
            <person name="Sanders S."/>
            <person name="Earl J."/>
            <person name="O'Neill S.L."/>
            <person name="Thomson N."/>
            <person name="Sinkins S.P."/>
            <person name="Parkhill J."/>
        </authorList>
    </citation>
    <scope>NUCLEOTIDE SEQUENCE [LARGE SCALE GENOMIC DNA]</scope>
    <source>
        <strain>wPip</strain>
    </source>
</reference>
<dbReference type="EMBL" id="AM999887">
    <property type="protein sequence ID" value="CAQ55183.1"/>
    <property type="molecule type" value="Genomic_DNA"/>
</dbReference>
<dbReference type="RefSeq" id="WP_007302454.1">
    <property type="nucleotide sequence ID" value="NC_010981.1"/>
</dbReference>
<dbReference type="SMR" id="B3CMR1"/>
<dbReference type="KEGG" id="wpi:WP1075"/>
<dbReference type="eggNOG" id="COG0224">
    <property type="taxonomic scope" value="Bacteria"/>
</dbReference>
<dbReference type="HOGENOM" id="CLU_050669_0_1_5"/>
<dbReference type="Proteomes" id="UP000008814">
    <property type="component" value="Chromosome"/>
</dbReference>
<dbReference type="GO" id="GO:0005886">
    <property type="term" value="C:plasma membrane"/>
    <property type="evidence" value="ECO:0007669"/>
    <property type="project" value="UniProtKB-SubCell"/>
</dbReference>
<dbReference type="GO" id="GO:0045259">
    <property type="term" value="C:proton-transporting ATP synthase complex"/>
    <property type="evidence" value="ECO:0007669"/>
    <property type="project" value="UniProtKB-KW"/>
</dbReference>
<dbReference type="GO" id="GO:0005524">
    <property type="term" value="F:ATP binding"/>
    <property type="evidence" value="ECO:0007669"/>
    <property type="project" value="UniProtKB-UniRule"/>
</dbReference>
<dbReference type="GO" id="GO:0046933">
    <property type="term" value="F:proton-transporting ATP synthase activity, rotational mechanism"/>
    <property type="evidence" value="ECO:0007669"/>
    <property type="project" value="UniProtKB-UniRule"/>
</dbReference>
<dbReference type="GO" id="GO:0042777">
    <property type="term" value="P:proton motive force-driven plasma membrane ATP synthesis"/>
    <property type="evidence" value="ECO:0007669"/>
    <property type="project" value="UniProtKB-UniRule"/>
</dbReference>
<dbReference type="CDD" id="cd12151">
    <property type="entry name" value="F1-ATPase_gamma"/>
    <property type="match status" value="1"/>
</dbReference>
<dbReference type="Gene3D" id="3.40.1380.10">
    <property type="match status" value="1"/>
</dbReference>
<dbReference type="Gene3D" id="1.10.287.80">
    <property type="entry name" value="ATP synthase, gamma subunit, helix hairpin domain"/>
    <property type="match status" value="1"/>
</dbReference>
<dbReference type="HAMAP" id="MF_00815">
    <property type="entry name" value="ATP_synth_gamma_bact"/>
    <property type="match status" value="1"/>
</dbReference>
<dbReference type="InterPro" id="IPR035968">
    <property type="entry name" value="ATP_synth_F1_ATPase_gsu"/>
</dbReference>
<dbReference type="InterPro" id="IPR000131">
    <property type="entry name" value="ATP_synth_F1_gsu"/>
</dbReference>
<dbReference type="NCBIfam" id="TIGR01146">
    <property type="entry name" value="ATPsyn_F1gamma"/>
    <property type="match status" value="1"/>
</dbReference>
<dbReference type="PANTHER" id="PTHR11693">
    <property type="entry name" value="ATP SYNTHASE GAMMA CHAIN"/>
    <property type="match status" value="1"/>
</dbReference>
<dbReference type="PANTHER" id="PTHR11693:SF22">
    <property type="entry name" value="ATP SYNTHASE SUBUNIT GAMMA, MITOCHONDRIAL"/>
    <property type="match status" value="1"/>
</dbReference>
<dbReference type="Pfam" id="PF00231">
    <property type="entry name" value="ATP-synt"/>
    <property type="match status" value="1"/>
</dbReference>
<dbReference type="PRINTS" id="PR00126">
    <property type="entry name" value="ATPASEGAMMA"/>
</dbReference>
<dbReference type="SUPFAM" id="SSF52943">
    <property type="entry name" value="ATP synthase (F1-ATPase), gamma subunit"/>
    <property type="match status" value="1"/>
</dbReference>
<name>ATPG_WOLPP</name>
<organism>
    <name type="scientific">Wolbachia pipientis subsp. Culex pipiens (strain wPip)</name>
    <dbReference type="NCBI Taxonomy" id="570417"/>
    <lineage>
        <taxon>Bacteria</taxon>
        <taxon>Pseudomonadati</taxon>
        <taxon>Pseudomonadota</taxon>
        <taxon>Alphaproteobacteria</taxon>
        <taxon>Rickettsiales</taxon>
        <taxon>Anaplasmataceae</taxon>
        <taxon>Wolbachieae</taxon>
        <taxon>Wolbachia</taxon>
    </lineage>
</organism>
<feature type="chain" id="PRO_1000134220" description="ATP synthase gamma chain">
    <location>
        <begin position="1"/>
        <end position="290"/>
    </location>
</feature>
<accession>B3CMR1</accession>
<protein>
    <recommendedName>
        <fullName evidence="1">ATP synthase gamma chain</fullName>
    </recommendedName>
    <alternativeName>
        <fullName evidence="1">ATP synthase F1 sector gamma subunit</fullName>
    </alternativeName>
    <alternativeName>
        <fullName evidence="1">F-ATPase gamma subunit</fullName>
    </alternativeName>
</protein>
<gene>
    <name evidence="1" type="primary">atpG</name>
    <name type="ordered locus">WP1075</name>
</gene>
<comment type="function">
    <text evidence="1">Produces ATP from ADP in the presence of a proton gradient across the membrane. The gamma chain is believed to be important in regulating ATPase activity and the flow of protons through the CF(0) complex.</text>
</comment>
<comment type="subunit">
    <text evidence="1">F-type ATPases have 2 components, CF(1) - the catalytic core - and CF(0) - the membrane proton channel. CF(1) has five subunits: alpha(3), beta(3), gamma(1), delta(1), epsilon(1). CF(0) has three main subunits: a, b and c.</text>
</comment>
<comment type="subcellular location">
    <subcellularLocation>
        <location evidence="1">Cell membrane</location>
        <topology evidence="1">Peripheral membrane protein</topology>
    </subcellularLocation>
</comment>
<comment type="similarity">
    <text evidence="1">Belongs to the ATPase gamma chain family.</text>
</comment>